<organism>
    <name type="scientific">Tetradesmus obliquus</name>
    <name type="common">Green alga</name>
    <name type="synonym">Acutodesmus obliquus</name>
    <dbReference type="NCBI Taxonomy" id="3088"/>
    <lineage>
        <taxon>Eukaryota</taxon>
        <taxon>Viridiplantae</taxon>
        <taxon>Chlorophyta</taxon>
        <taxon>core chlorophytes</taxon>
        <taxon>Chlorophyceae</taxon>
        <taxon>CS clade</taxon>
        <taxon>Sphaeropleales</taxon>
        <taxon>Scenedesmaceae</taxon>
        <taxon>Tetradesmus</taxon>
    </lineage>
</organism>
<gene>
    <name evidence="1" type="primary">ycf3</name>
</gene>
<dbReference type="EMBL" id="DQ396875">
    <property type="protein sequence ID" value="ABD48289.1"/>
    <property type="molecule type" value="Genomic_DNA"/>
</dbReference>
<dbReference type="RefSeq" id="YP_636006.1">
    <property type="nucleotide sequence ID" value="NC_008101.1"/>
</dbReference>
<dbReference type="SMR" id="Q1KVR8"/>
<dbReference type="GeneID" id="4099779"/>
<dbReference type="GO" id="GO:0009535">
    <property type="term" value="C:chloroplast thylakoid membrane"/>
    <property type="evidence" value="ECO:0007669"/>
    <property type="project" value="UniProtKB-SubCell"/>
</dbReference>
<dbReference type="GO" id="GO:0015979">
    <property type="term" value="P:photosynthesis"/>
    <property type="evidence" value="ECO:0007669"/>
    <property type="project" value="UniProtKB-UniRule"/>
</dbReference>
<dbReference type="FunFam" id="1.25.40.10:FF:000004">
    <property type="entry name" value="Photosystem I assembly protein Ycf3"/>
    <property type="match status" value="1"/>
</dbReference>
<dbReference type="Gene3D" id="1.25.40.10">
    <property type="entry name" value="Tetratricopeptide repeat domain"/>
    <property type="match status" value="1"/>
</dbReference>
<dbReference type="HAMAP" id="MF_00439">
    <property type="entry name" value="Ycf3"/>
    <property type="match status" value="1"/>
</dbReference>
<dbReference type="InterPro" id="IPR022818">
    <property type="entry name" value="PSI_Ycf3_assembly"/>
</dbReference>
<dbReference type="InterPro" id="IPR011990">
    <property type="entry name" value="TPR-like_helical_dom_sf"/>
</dbReference>
<dbReference type="InterPro" id="IPR019734">
    <property type="entry name" value="TPR_rpt"/>
</dbReference>
<dbReference type="NCBIfam" id="NF002725">
    <property type="entry name" value="PRK02603.1"/>
    <property type="match status" value="1"/>
</dbReference>
<dbReference type="Pfam" id="PF00515">
    <property type="entry name" value="TPR_1"/>
    <property type="match status" value="1"/>
</dbReference>
<dbReference type="SMART" id="SM00028">
    <property type="entry name" value="TPR"/>
    <property type="match status" value="3"/>
</dbReference>
<dbReference type="SUPFAM" id="SSF48452">
    <property type="entry name" value="TPR-like"/>
    <property type="match status" value="1"/>
</dbReference>
<dbReference type="PROSITE" id="PS50005">
    <property type="entry name" value="TPR"/>
    <property type="match status" value="3"/>
</dbReference>
<dbReference type="PROSITE" id="PS50293">
    <property type="entry name" value="TPR_REGION"/>
    <property type="match status" value="1"/>
</dbReference>
<comment type="function">
    <text evidence="1">Essential for the assembly of the photosystem I (PSI) complex. May act as a chaperone-like factor to guide the assembly of the PSI subunits.</text>
</comment>
<comment type="subcellular location">
    <subcellularLocation>
        <location evidence="1">Plastid</location>
        <location evidence="1">Chloroplast thylakoid membrane</location>
        <topology evidence="1">Peripheral membrane protein</topology>
    </subcellularLocation>
</comment>
<comment type="similarity">
    <text evidence="1">Belongs to the Ycf3 family.</text>
</comment>
<geneLocation type="chloroplast"/>
<keyword id="KW-0150">Chloroplast</keyword>
<keyword id="KW-0472">Membrane</keyword>
<keyword id="KW-0602">Photosynthesis</keyword>
<keyword id="KW-0934">Plastid</keyword>
<keyword id="KW-0677">Repeat</keyword>
<keyword id="KW-0793">Thylakoid</keyword>
<keyword id="KW-0802">TPR repeat</keyword>
<evidence type="ECO:0000255" key="1">
    <source>
        <dbReference type="HAMAP-Rule" id="MF_00439"/>
    </source>
</evidence>
<name>YCF3_TETOB</name>
<feature type="chain" id="PRO_0000275635" description="Photosystem I assembly protein Ycf3">
    <location>
        <begin position="1"/>
        <end position="170"/>
    </location>
</feature>
<feature type="repeat" description="TPR 1">
    <location>
        <begin position="35"/>
        <end position="68"/>
    </location>
</feature>
<feature type="repeat" description="TPR 2">
    <location>
        <begin position="72"/>
        <end position="105"/>
    </location>
</feature>
<feature type="repeat" description="TPR 3">
    <location>
        <begin position="120"/>
        <end position="153"/>
    </location>
</feature>
<protein>
    <recommendedName>
        <fullName evidence="1">Photosystem I assembly protein Ycf3</fullName>
    </recommendedName>
</protein>
<accession>Q1KVR8</accession>
<sequence length="170" mass="19679">MPRSQRNDNFIDKTFTVIADILLKVLPTSQREKQAFTYYRDGMSAQAEGEYAEALQNYYEAMRLEVDAYDRSYILYNIGLIHTSNGEHGRALEYYYQALERNPSLPSALNNIAVIYHYRGEQAIENGQSEISQILFEKAADYWKEAIRLAPTNYIEAQNWLKMTGRNTGL</sequence>
<proteinExistence type="inferred from homology"/>
<reference key="1">
    <citation type="journal article" date="2006" name="BMC Evol. Biol.">
        <title>The complete chloroplast genome sequence of the chlorophycean green alga Scenedesmus obliquus reveals a compact gene organization and a biased distribution of genes on the two DNA strands.</title>
        <authorList>
            <person name="de Cambiaire J.-C."/>
            <person name="Otis C."/>
            <person name="Lemieux C."/>
            <person name="Turmel M."/>
        </authorList>
    </citation>
    <scope>NUCLEOTIDE SEQUENCE [LARGE SCALE GENOMIC DNA]</scope>
    <source>
        <strain>UTEX 393</strain>
    </source>
</reference>